<organism>
    <name type="scientific">Cyanophora paradoxa</name>
    <dbReference type="NCBI Taxonomy" id="2762"/>
    <lineage>
        <taxon>Eukaryota</taxon>
        <taxon>Glaucocystophyceae</taxon>
        <taxon>Cyanophoraceae</taxon>
        <taxon>Cyanophora</taxon>
    </lineage>
</organism>
<dbReference type="EMBL" id="U30821">
    <property type="protein sequence ID" value="AAA81266.1"/>
    <property type="molecule type" value="Genomic_DNA"/>
</dbReference>
<dbReference type="PIR" id="T06923">
    <property type="entry name" value="T06923"/>
</dbReference>
<dbReference type="RefSeq" id="NP_043235.1">
    <property type="nucleotide sequence ID" value="NC_001675.1"/>
</dbReference>
<dbReference type="SMR" id="P48367"/>
<dbReference type="GeneID" id="801521"/>
<dbReference type="GO" id="GO:0009842">
    <property type="term" value="C:cyanelle"/>
    <property type="evidence" value="ECO:0007669"/>
    <property type="project" value="UniProtKB-SubCell"/>
</dbReference>
<dbReference type="GO" id="GO:0016168">
    <property type="term" value="F:chlorophyll binding"/>
    <property type="evidence" value="ECO:0007669"/>
    <property type="project" value="UniProtKB-KW"/>
</dbReference>
<dbReference type="Gene3D" id="1.10.3460.10">
    <property type="entry name" value="Chlorophyll a/b binding protein domain"/>
    <property type="match status" value="1"/>
</dbReference>
<dbReference type="SUPFAM" id="SSF103511">
    <property type="entry name" value="Chlorophyll a-b binding protein"/>
    <property type="match status" value="1"/>
</dbReference>
<keyword id="KW-0148">Chlorophyll</keyword>
<keyword id="KW-0157">Chromophore</keyword>
<keyword id="KW-0194">Cyanelle</keyword>
<keyword id="KW-0934">Plastid</keyword>
<reference key="1">
    <citation type="journal article" date="1995" name="Plant Mol. Biol. Rep.">
        <title>Nucleotide sequence of the cyanelle DNA from Cyanophora paradoxa.</title>
        <authorList>
            <person name="Stirewalt V.L."/>
            <person name="Michalowski C.B."/>
            <person name="Loeffelhardt W."/>
            <person name="Bohnert H.J."/>
            <person name="Bryant D.A."/>
        </authorList>
    </citation>
    <scope>NUCLEOTIDE SEQUENCE [LARGE SCALE GENOMIC DNA]</scope>
    <source>
        <strain>UTEX LB 555 / Pringsheim</strain>
    </source>
</reference>
<reference key="2">
    <citation type="book" date="1997" name="Eukaryotism and symbiosis">
        <title>The complete sequence of the cyanelle genome of Cyanophora paradoxa: the genetic complexity of a primitive plastid.</title>
        <editorList>
            <person name="Schenk H.E.A."/>
            <person name="Herrmann R."/>
            <person name="Jeon K.W."/>
            <person name="Mueller N.E."/>
            <person name="Schwemmler W."/>
        </editorList>
        <authorList>
            <person name="Loeffelhardt W."/>
            <person name="Stirewalt V.L."/>
            <person name="Michalowski C.B."/>
            <person name="Annarella M."/>
            <person name="Farley J.Y."/>
            <person name="Schluchter W.M."/>
            <person name="Chung S."/>
            <person name="Newmann-Spallart C."/>
            <person name="Steiner J.M."/>
            <person name="Jakowitsch J."/>
            <person name="Bohnert H.J."/>
            <person name="Bryant D.A."/>
        </authorList>
    </citation>
    <scope>NUCLEOTIDE SEQUENCE [LARGE SCALE GENOMIC DNA]</scope>
    <source>
        <strain>UTEX LB 555 / Pringsheim</strain>
    </source>
</reference>
<comment type="function">
    <text>Possible role in chlorophyll and/or carotenoid binding.</text>
</comment>
<comment type="subcellular location">
    <subcellularLocation>
        <location>Plastid</location>
        <location>Cyanelle</location>
    </subcellularLocation>
</comment>
<comment type="similarity">
    <text evidence="1">Belongs to the ELIP/psbS family.</text>
</comment>
<gene>
    <name type="primary">ycf17</name>
</gene>
<geneLocation type="cyanelle"/>
<proteinExistence type="inferred from homology"/>
<name>YCF17_CYAPA</name>
<evidence type="ECO:0000305" key="1"/>
<feature type="chain" id="PRO_0000185447" description="Uncharacterized protein Ycf17">
    <location>
        <begin position="1"/>
        <end position="49"/>
    </location>
</feature>
<protein>
    <recommendedName>
        <fullName>Uncharacterized protein Ycf17</fullName>
    </recommendedName>
    <alternativeName>
        <fullName>ORF48</fullName>
    </alternativeName>
</protein>
<sequence>MQEERNIWNWGFTSGAENWNGRLAMLGFIAALLTESLTGQGTLHFLGIL</sequence>
<accession>P48367</accession>